<proteinExistence type="evidence at protein level"/>
<organism>
    <name type="scientific">Escherichia coli</name>
    <dbReference type="NCBI Taxonomy" id="562"/>
    <lineage>
        <taxon>Bacteria</taxon>
        <taxon>Pseudomonadati</taxon>
        <taxon>Pseudomonadota</taxon>
        <taxon>Gammaproteobacteria</taxon>
        <taxon>Enterobacterales</taxon>
        <taxon>Enterobacteriaceae</taxon>
        <taxon>Escherichia</taxon>
    </lineage>
</organism>
<dbReference type="EC" id="3.1.21.4" evidence="1"/>
<dbReference type="EC" id="2.1.1.72" evidence="1"/>
<dbReference type="EMBL" id="M74821">
    <property type="protein sequence ID" value="AAA23389.1"/>
    <property type="molecule type" value="Genomic_DNA"/>
</dbReference>
<dbReference type="EMBL" id="X61122">
    <property type="protein sequence ID" value="CAA43434.3"/>
    <property type="molecule type" value="Genomic_DNA"/>
</dbReference>
<dbReference type="PIR" id="S26426">
    <property type="entry name" value="S26426"/>
</dbReference>
<dbReference type="SMR" id="P25239"/>
<dbReference type="REBASE" id="941">
    <property type="entry name" value="Eco57I"/>
</dbReference>
<dbReference type="BRENDA" id="3.1.21.4">
    <property type="organism ID" value="2026"/>
</dbReference>
<dbReference type="PRO" id="PR:P25239"/>
<dbReference type="GO" id="GO:0003677">
    <property type="term" value="F:DNA binding"/>
    <property type="evidence" value="ECO:0007669"/>
    <property type="project" value="UniProtKB-KW"/>
</dbReference>
<dbReference type="GO" id="GO:0009007">
    <property type="term" value="F:site-specific DNA-methyltransferase (adenine-specific) activity"/>
    <property type="evidence" value="ECO:0007669"/>
    <property type="project" value="UniProtKB-EC"/>
</dbReference>
<dbReference type="GO" id="GO:0009036">
    <property type="term" value="F:type II site-specific deoxyribonuclease activity"/>
    <property type="evidence" value="ECO:0007669"/>
    <property type="project" value="UniProtKB-EC"/>
</dbReference>
<dbReference type="GO" id="GO:0009307">
    <property type="term" value="P:DNA restriction-modification system"/>
    <property type="evidence" value="ECO:0007669"/>
    <property type="project" value="UniProtKB-KW"/>
</dbReference>
<dbReference type="GO" id="GO:0032259">
    <property type="term" value="P:methylation"/>
    <property type="evidence" value="ECO:0007669"/>
    <property type="project" value="UniProtKB-KW"/>
</dbReference>
<dbReference type="Gene3D" id="3.40.50.150">
    <property type="entry name" value="Vaccinia Virus protein VP39"/>
    <property type="match status" value="1"/>
</dbReference>
<dbReference type="InterPro" id="IPR002052">
    <property type="entry name" value="DNA_methylase_N6_adenine_CS"/>
</dbReference>
<dbReference type="InterPro" id="IPR011639">
    <property type="entry name" value="MethylTrfase_TaqI-like_dom"/>
</dbReference>
<dbReference type="InterPro" id="IPR050953">
    <property type="entry name" value="N4_N6_ade-DNA_methylase"/>
</dbReference>
<dbReference type="InterPro" id="IPR029063">
    <property type="entry name" value="SAM-dependent_MTases_sf"/>
</dbReference>
<dbReference type="PANTHER" id="PTHR33841:SF1">
    <property type="entry name" value="DNA METHYLTRANSFERASE A"/>
    <property type="match status" value="1"/>
</dbReference>
<dbReference type="PANTHER" id="PTHR33841">
    <property type="entry name" value="DNA METHYLTRANSFERASE YEEA-RELATED"/>
    <property type="match status" value="1"/>
</dbReference>
<dbReference type="Pfam" id="PF07669">
    <property type="entry name" value="Eco57I"/>
    <property type="match status" value="1"/>
</dbReference>
<dbReference type="PRINTS" id="PR00507">
    <property type="entry name" value="N12N6MTFRASE"/>
</dbReference>
<dbReference type="SUPFAM" id="SSF53335">
    <property type="entry name" value="S-adenosyl-L-methionine-dependent methyltransferases"/>
    <property type="match status" value="1"/>
</dbReference>
<dbReference type="PROSITE" id="PS00092">
    <property type="entry name" value="N6_MTASE"/>
    <property type="match status" value="1"/>
</dbReference>
<protein>
    <recommendedName>
        <fullName evidence="3">Type II restriction enzyme and methyltransferase RM.Eco57I</fullName>
        <ecNumber evidence="1">3.1.21.4</ecNumber>
    </recommendedName>
    <alternativeName>
        <fullName>Endonuclease Eco57I</fullName>
    </alternativeName>
    <alternativeName>
        <fullName>Type IIS restriction enzyme Eco57I</fullName>
    </alternativeName>
    <domain>
        <recommendedName>
            <fullName>Adenine-specific methyltransferase activity Eco57IA</fullName>
            <shortName>M.Eco57IA</shortName>
            <ecNumber evidence="1">2.1.1.72</ecNumber>
        </recommendedName>
    </domain>
</protein>
<sequence>MNKKDQLQRLIDKYKSDIDYYRSARYNETQLRTDFLDQLFLILGWDITNAAGKPTNEREVLVEEGLKARAGENTKKPDYTFRLFSERKFFLEAKKPSVDISTTIEPALQVRRYGFTAKLKISVLSNFEYTAIYDCSNQVKETDSVANSRIKLYHFTELVDKFDEINNLIGRESVYTGHFDNEWSEIENKILRFSVDDLFLKQINDWRLLLANEFLQIKNELPEEKLNDLVQNYINSIVFLRVCEDRDLEEYETLYHFAQDKDFQSLVKKLKSSDKKYNSGLFSLEYIDELLSNANSCIWSIIEQLYFPQSTYSFSVFSSDILGNIYEIFLSEKVRIDELGNVKIQPKEEHIDRDVVTTPTHIVKEIIRNTVVEYCKGKSDIEILNSKFADIACGSGAFIIEAFQFIQDILIDYYIQNDKSKLQQISEHTYKLKFEVKREILCKCIYGIDKDYNATKACTFGLLLKLLEGETTETIGKDTPILPALDTNILFGNSLIDSGDKVKQEDIFSINPFDLTNYQFDVIVGNPPYMATEHMNQLTPKELDIYKRKYKSAYKQFDKYFLFIERSIQILKEYGYLGYILPSRFIKVDAGKKLRKFLSENKYLSKLISFGSHQVFKNKTTYTCLLFLNKENHDNFSFYEVKDFKKWLTREDKYLLSSTYQTSSLDSDTWVLEKKINDILKLMFSKSEQLGNIVGKSNVANGIQTSANKYYIHKEIKSENGFIYFEYDGIEYHIEKELTRPYFETNRSGDDSFYTYKDVEPNSFVVYPYKKVGERIQFIEYDELKRQYPKLFEFLQVVKVHLNDKKRSIKPDPTGPNEWYRYGRSQALENCDVDQKLIVGILSNGYKYSIDNHRTFVSSGGTAGYSIINIPNNVRYSIYYIQAILTSKYLEWFASIYGDIFRGRFVARGTKVQTRMPIPTIDFDDPKQKEIHDTISSKQQYLNKLYSQTQKSADRDKIIFERQFEQEKIQMDYLIKNLFDLGDLDSEIPTVEDLYKNL</sequence>
<evidence type="ECO:0000269" key="1">
    <source>
    </source>
</evidence>
<evidence type="ECO:0000269" key="2">
    <source>
    </source>
</evidence>
<evidence type="ECO:0000303" key="3">
    <source>
    </source>
</evidence>
<evidence type="ECO:0000303" key="4">
    <source>
    </source>
</evidence>
<evidence type="ECO:0000305" key="5"/>
<evidence type="ECO:0000305" key="6">
    <source>
    </source>
</evidence>
<name>T257_ECOLX</name>
<feature type="chain" id="PRO_0000077274" description="Type II restriction enzyme and methyltransferase RM.Eco57I">
    <location>
        <begin position="1"/>
        <end position="998"/>
    </location>
</feature>
<feature type="sequence conflict" description="In Ref. 1; AAA23389." evidence="5" ref="1">
    <original>I</original>
    <variation>L</variation>
    <location>
        <position position="42"/>
    </location>
</feature>
<feature type="sequence conflict" description="In Ref. 1; AAA23389." evidence="5" ref="1">
    <original>R</original>
    <variation>G</variation>
    <location>
        <position position="207"/>
    </location>
</feature>
<feature type="sequence conflict" description="In Ref. 1; AAA23389." evidence="5" ref="1">
    <original>WSIIEQLYFPQSTYSFSVFSSDI</original>
    <variation>EHHRTIILPHKAHTLSLFSLLIF</variation>
    <location>
        <begin position="299"/>
        <end position="321"/>
    </location>
</feature>
<feature type="sequence conflict" description="In Ref. 1; AAA23389." evidence="5" ref="1">
    <original>E</original>
    <variation>V</variation>
    <location>
        <position position="401"/>
    </location>
</feature>
<feature type="sequence conflict" description="In Ref. 1; AAA23389." evidence="5" ref="1">
    <original>F</original>
    <variation>N</variation>
    <location>
        <position position="644"/>
    </location>
</feature>
<feature type="sequence conflict" description="In Ref. 1; AAA23389." evidence="5" ref="1">
    <original>PNEWYRYG</original>
    <variation>LMMVQIR</variation>
    <location>
        <begin position="816"/>
        <end position="823"/>
    </location>
</feature>
<reference key="1">
    <citation type="journal article" date="1992" name="Nucleic Acids Res.">
        <title>Cloning and sequence analysis of the genes coding for Eco57I type IV restriction-modification enzymes.</title>
        <authorList>
            <person name="Janulaitis A."/>
            <person name="Vaisvila R."/>
            <person name="Timinskas A."/>
            <person name="Klimasauskas S."/>
            <person name="Butkus V."/>
        </authorList>
    </citation>
    <scope>NUCLEOTIDE SEQUENCE [GENOMIC DNA]</scope>
    <scope>PROTEIN SEQUENCE OF 1-5</scope>
    <scope>FUNCTION</scope>
    <source>
        <strain>RFL57</strain>
    </source>
</reference>
<reference key="2">
    <citation type="journal article" date="2003" name="Nucleic Acids Res.">
        <title>A nomenclature for restriction enzymes, DNA methyltransferases, homing endonucleases and their genes.</title>
        <authorList>
            <person name="Roberts R.J."/>
            <person name="Belfort M."/>
            <person name="Bestor T."/>
            <person name="Bhagwat A.S."/>
            <person name="Bickle T.A."/>
            <person name="Bitinaite J."/>
            <person name="Blumenthal R.M."/>
            <person name="Degtyarev S.K."/>
            <person name="Dryden D.T."/>
            <person name="Dybvig K."/>
            <person name="Firman K."/>
            <person name="Gromova E.S."/>
            <person name="Gumport R.I."/>
            <person name="Halford S.E."/>
            <person name="Hattman S."/>
            <person name="Heitman J."/>
            <person name="Hornby D.P."/>
            <person name="Janulaitis A."/>
            <person name="Jeltsch A."/>
            <person name="Josephsen J."/>
            <person name="Kiss A."/>
            <person name="Klaenhammer T.R."/>
            <person name="Kobayashi I."/>
            <person name="Kong H."/>
            <person name="Krueger D.H."/>
            <person name="Lacks S."/>
            <person name="Marinus M.G."/>
            <person name="Miyahara M."/>
            <person name="Morgan R.D."/>
            <person name="Murray N.E."/>
            <person name="Nagaraja V."/>
            <person name="Piekarowicz A."/>
            <person name="Pingoud A."/>
            <person name="Raleigh E."/>
            <person name="Rao D.N."/>
            <person name="Reich N."/>
            <person name="Repin V.E."/>
            <person name="Selker E.U."/>
            <person name="Shaw P.C."/>
            <person name="Stein D.C."/>
            <person name="Stoddard B.L."/>
            <person name="Szybalski W."/>
            <person name="Trautner T.A."/>
            <person name="Van Etten J.L."/>
            <person name="Vitor J.M."/>
            <person name="Wilson G.G."/>
            <person name="Xu S.Y."/>
        </authorList>
    </citation>
    <scope>NOMENCLATURE</scope>
    <scope>SUBTYPES</scope>
</reference>
<reference key="3">
    <citation type="journal article" date="2004" name="Biochim. Biophys. Acta">
        <title>Crystallization and preliminary crystallographic studies of a bifunctional restriction endonuclease Eco57I.</title>
        <authorList>
            <person name="Tamulaitiene G."/>
            <person name="Grazulis S."/>
            <person name="Janulaitis A."/>
            <person name="Janowski R."/>
            <person name="Bujacz G."/>
            <person name="Jaskolski M."/>
        </authorList>
    </citation>
    <scope>X-RAY CRYSTALLOGRAPHY (4.2 ANGSTROMS) IN COMPLEX WITH DNA</scope>
    <scope>SEQUENCE REVISION</scope>
</reference>
<reference key="4">
    <citation type="journal article" date="1992" name="Nucleic Acids Res.">
        <title>Purification and properties of the Eco57I restriction endonuclease and methylase -- prototypes of a new class (type IV).</title>
        <authorList>
            <person name="Janulaitis A."/>
            <person name="Petrusyte M."/>
            <person name="Maneliene Z."/>
            <person name="Klimasauskas S."/>
            <person name="Butkus V."/>
        </authorList>
    </citation>
    <scope>FUNCTION</scope>
    <scope>CATALYTIC ACTIVITY</scope>
    <scope>ACTIVITY REGULATION</scope>
    <scope>BIOPHYSICOCHEMICAL PROPERTIES</scope>
    <scope>SUBUNIT</scope>
</reference>
<gene>
    <name evidence="4" type="primary">eco57IR</name>
</gene>
<comment type="function">
    <text evidence="1 2 3">An E, G and S subtype restriction enzyme that recognizes the (non-palindromic) double-stranded sequence 5'-CTGAAG-3' and cleaves respectively 22 bases after C-1 and 14 bases before C'-1; cleavage of lambda DNA is never complete. Also acts as a methylase that causes specific methylation on A-5 in 5'-CTGAAG-3', the other strand is methylated by the M.Eco57I methylase.</text>
</comment>
<comment type="catalytic activity">
    <reaction evidence="1">
        <text>Endonucleolytic cleavage of DNA to give specific double-stranded fragments with terminal 5'-phosphates.</text>
        <dbReference type="EC" id="3.1.21.4"/>
    </reaction>
</comment>
<comment type="catalytic activity">
    <reaction evidence="1">
        <text>a 2'-deoxyadenosine in DNA + S-adenosyl-L-methionine = an N(6)-methyl-2'-deoxyadenosine in DNA + S-adenosyl-L-homocysteine + H(+)</text>
        <dbReference type="Rhea" id="RHEA:15197"/>
        <dbReference type="Rhea" id="RHEA-COMP:12418"/>
        <dbReference type="Rhea" id="RHEA-COMP:12419"/>
        <dbReference type="ChEBI" id="CHEBI:15378"/>
        <dbReference type="ChEBI" id="CHEBI:57856"/>
        <dbReference type="ChEBI" id="CHEBI:59789"/>
        <dbReference type="ChEBI" id="CHEBI:90615"/>
        <dbReference type="ChEBI" id="CHEBI:90616"/>
        <dbReference type="EC" id="2.1.1.72"/>
    </reaction>
</comment>
<comment type="activity regulation">
    <text evidence="1">Mg(2+) is absolutely required for DNA restriction.</text>
</comment>
<comment type="biophysicochemical properties">
    <phDependence>
        <text evidence="1">Optimum pH is 9.0 for DNA restriction and 7.5 for methylation.</text>
    </phDependence>
</comment>
<comment type="subunit">
    <text evidence="6">Monomer.</text>
</comment>
<comment type="similarity">
    <text evidence="5">In the C-terminal section; belongs to the N(4)/N(6)-methyltransferase family.</text>
</comment>
<accession>P25239</accession>
<keyword id="KW-0903">Direct protein sequencing</keyword>
<keyword id="KW-0238">DNA-binding</keyword>
<keyword id="KW-0255">Endonuclease</keyword>
<keyword id="KW-0378">Hydrolase</keyword>
<keyword id="KW-0489">Methyltransferase</keyword>
<keyword id="KW-0511">Multifunctional enzyme</keyword>
<keyword id="KW-0540">Nuclease</keyword>
<keyword id="KW-0680">Restriction system</keyword>
<keyword id="KW-0949">S-adenosyl-L-methionine</keyword>
<keyword id="KW-0808">Transferase</keyword>